<comment type="function">
    <text evidence="1 2">Transcriptional regulator that controls a genetic switch in male development. It is necessary and sufficient for initiating male sex determination by directing the development of supporting cell precursors (pre-Sertoli cells) as Sertoli rather than granulosa cells. Involved in different aspects of gene regulation including promoter activation or repression. Binds to the DNA consensus sequence 5'-[AT]AACAA[AT]-3'. SRY HMG box recognizes DNA by partial intercalation in the minor groove and promotes DNA bending. Also involved in pre-mRNA splicing (By similarity). In male adult brain involved in the maintenance of motor functions of dopaminergic neurons (By similarity).</text>
</comment>
<comment type="subunit">
    <text evidence="2">Interacts with CALM, EP300, HDAC3, KPNB1, ZNF208 isoform KRAB-O, PARP1, SLC9A3R2 and WT1. The interaction with EP300 modulates its DNA-binding activity. The interaction with KPNB1 is sensitive to dissociation by Ran in the GTP-bound form. Interaction with PARP1 impaired its DNA-binding activity.</text>
</comment>
<comment type="subcellular location">
    <subcellularLocation>
        <location evidence="2">Nucleus speckle</location>
    </subcellularLocation>
    <subcellularLocation>
        <location evidence="2">Cytoplasm</location>
    </subcellularLocation>
    <subcellularLocation>
        <location evidence="2">Nucleus</location>
    </subcellularLocation>
</comment>
<comment type="PTM">
    <text evidence="2">Acetylation of Lys-136 contributes to its nuclear localization and enhances its interaction with KPNB1. Deacetylated by HDAC3.</text>
</comment>
<comment type="similarity">
    <text evidence="5">Belongs to the SRY family.</text>
</comment>
<comment type="online information" name="Protein Spotlight">
    <link uri="https://www.proteinspotlight.org/back_issues/080"/>
    <text>The tenuous nature of sex - Issue 80 of March 2007</text>
</comment>
<sequence>MQSYASAMLSVFNSDYYSPAVQQNTPALRRSSSFICTESCNSKYPCETGENSKVSVQDRVKRPMNAFIVWSRDQRRKMALENPKMRNSEISKQLGYRWKMLTEAEKWPFFQEAQKLQAMHREKYPNYKYRPRRKAKMLQKSCSLLPADSASVLCSKVQLDNRLYRDDCTKATHSRMEHQLGHLPPINTASSPQQQDHYSHSTKL</sequence>
<gene>
    <name type="primary">SRY</name>
    <name type="synonym">TDF</name>
</gene>
<protein>
    <recommendedName>
        <fullName>Sex-determining region Y protein</fullName>
    </recommendedName>
    <alternativeName>
        <fullName>Testis-determining factor</fullName>
    </alternativeName>
</protein>
<dbReference type="EMBL" id="X86384">
    <property type="protein sequence ID" value="CAA60144.1"/>
    <property type="molecule type" value="Genomic_DNA"/>
</dbReference>
<dbReference type="PIR" id="S35562">
    <property type="entry name" value="S35562"/>
</dbReference>
<dbReference type="SMR" id="Q28447"/>
<dbReference type="GO" id="GO:0005737">
    <property type="term" value="C:cytoplasm"/>
    <property type="evidence" value="ECO:0007669"/>
    <property type="project" value="UniProtKB-SubCell"/>
</dbReference>
<dbReference type="GO" id="GO:0016607">
    <property type="term" value="C:nuclear speck"/>
    <property type="evidence" value="ECO:0007669"/>
    <property type="project" value="UniProtKB-SubCell"/>
</dbReference>
<dbReference type="GO" id="GO:0005634">
    <property type="term" value="C:nucleus"/>
    <property type="evidence" value="ECO:0000250"/>
    <property type="project" value="UniProtKB"/>
</dbReference>
<dbReference type="GO" id="GO:0005516">
    <property type="term" value="F:calmodulin binding"/>
    <property type="evidence" value="ECO:0007669"/>
    <property type="project" value="UniProtKB-KW"/>
</dbReference>
<dbReference type="GO" id="GO:0001228">
    <property type="term" value="F:DNA-binding transcription activator activity, RNA polymerase II-specific"/>
    <property type="evidence" value="ECO:0007669"/>
    <property type="project" value="TreeGrafter"/>
</dbReference>
<dbReference type="GO" id="GO:0000978">
    <property type="term" value="F:RNA polymerase II cis-regulatory region sequence-specific DNA binding"/>
    <property type="evidence" value="ECO:0007669"/>
    <property type="project" value="TreeGrafter"/>
</dbReference>
<dbReference type="GO" id="GO:0030154">
    <property type="term" value="P:cell differentiation"/>
    <property type="evidence" value="ECO:0007669"/>
    <property type="project" value="UniProtKB-KW"/>
</dbReference>
<dbReference type="GO" id="GO:0030238">
    <property type="term" value="P:male sex determination"/>
    <property type="evidence" value="ECO:0007669"/>
    <property type="project" value="InterPro"/>
</dbReference>
<dbReference type="GO" id="GO:0007548">
    <property type="term" value="P:sex differentiation"/>
    <property type="evidence" value="ECO:0007669"/>
    <property type="project" value="UniProtKB-KW"/>
</dbReference>
<dbReference type="CDD" id="cd22034">
    <property type="entry name" value="HMG-box_SoxA_SRY"/>
    <property type="match status" value="1"/>
</dbReference>
<dbReference type="FunFam" id="1.10.30.10:FF:000002">
    <property type="entry name" value="transcription factor Sox-2"/>
    <property type="match status" value="1"/>
</dbReference>
<dbReference type="Gene3D" id="1.10.30.10">
    <property type="entry name" value="High mobility group box domain"/>
    <property type="match status" value="1"/>
</dbReference>
<dbReference type="InterPro" id="IPR009071">
    <property type="entry name" value="HMG_box_dom"/>
</dbReference>
<dbReference type="InterPro" id="IPR036910">
    <property type="entry name" value="HMG_box_dom_sf"/>
</dbReference>
<dbReference type="InterPro" id="IPR017253">
    <property type="entry name" value="SRY"/>
</dbReference>
<dbReference type="InterPro" id="IPR050140">
    <property type="entry name" value="SRY-related_HMG-box_TF-like"/>
</dbReference>
<dbReference type="PANTHER" id="PTHR10270:SF161">
    <property type="entry name" value="SEX-DETERMINING REGION Y PROTEIN"/>
    <property type="match status" value="1"/>
</dbReference>
<dbReference type="PANTHER" id="PTHR10270">
    <property type="entry name" value="SOX TRANSCRIPTION FACTOR"/>
    <property type="match status" value="1"/>
</dbReference>
<dbReference type="Pfam" id="PF00505">
    <property type="entry name" value="HMG_box"/>
    <property type="match status" value="1"/>
</dbReference>
<dbReference type="PIRSF" id="PIRSF037653">
    <property type="entry name" value="SRY"/>
    <property type="match status" value="1"/>
</dbReference>
<dbReference type="SMART" id="SM00398">
    <property type="entry name" value="HMG"/>
    <property type="match status" value="1"/>
</dbReference>
<dbReference type="SUPFAM" id="SSF47095">
    <property type="entry name" value="HMG-box"/>
    <property type="match status" value="1"/>
</dbReference>
<dbReference type="PROSITE" id="PS50118">
    <property type="entry name" value="HMG_BOX_2"/>
    <property type="match status" value="1"/>
</dbReference>
<organism>
    <name type="scientific">Hylobates lar</name>
    <name type="common">Lar gibbon</name>
    <name type="synonym">White-handed gibbon</name>
    <dbReference type="NCBI Taxonomy" id="9580"/>
    <lineage>
        <taxon>Eukaryota</taxon>
        <taxon>Metazoa</taxon>
        <taxon>Chordata</taxon>
        <taxon>Craniata</taxon>
        <taxon>Vertebrata</taxon>
        <taxon>Euteleostomi</taxon>
        <taxon>Mammalia</taxon>
        <taxon>Eutheria</taxon>
        <taxon>Euarchontoglires</taxon>
        <taxon>Primates</taxon>
        <taxon>Haplorrhini</taxon>
        <taxon>Catarrhini</taxon>
        <taxon>Hylobatidae</taxon>
        <taxon>Hylobates</taxon>
    </lineage>
</organism>
<reference key="1">
    <citation type="journal article" date="1993" name="Nature">
        <title>Rapid sequence evolution of the mammalian sex-determining gene SRY.</title>
        <authorList>
            <person name="Whitfield L.S."/>
            <person name="Lovell-Badge R."/>
            <person name="Goodfellow P.N."/>
        </authorList>
    </citation>
    <scope>NUCLEOTIDE SEQUENCE [GENOMIC DNA]</scope>
</reference>
<proteinExistence type="inferred from homology"/>
<feature type="chain" id="PRO_0000048673" description="Sex-determining region Y protein">
    <location>
        <begin position="1"/>
        <end position="204"/>
    </location>
</feature>
<feature type="DNA-binding region" description="HMG box" evidence="3">
    <location>
        <begin position="60"/>
        <end position="128"/>
    </location>
</feature>
<feature type="region of interest" description="Disordered" evidence="4">
    <location>
        <begin position="176"/>
        <end position="204"/>
    </location>
</feature>
<feature type="compositionally biased region" description="Polar residues" evidence="4">
    <location>
        <begin position="187"/>
        <end position="196"/>
    </location>
</feature>
<keyword id="KW-0007">Acetylation</keyword>
<keyword id="KW-0010">Activator</keyword>
<keyword id="KW-0112">Calmodulin-binding</keyword>
<keyword id="KW-0963">Cytoplasm</keyword>
<keyword id="KW-0221">Differentiation</keyword>
<keyword id="KW-0238">DNA-binding</keyword>
<keyword id="KW-0539">Nucleus</keyword>
<keyword id="KW-0678">Repressor</keyword>
<keyword id="KW-0726">Sexual differentiation</keyword>
<keyword id="KW-0804">Transcription</keyword>
<keyword id="KW-0805">Transcription regulation</keyword>
<name>SRY_HYLLA</name>
<evidence type="ECO:0000250" key="1">
    <source>
        <dbReference type="UniProtKB" id="P36394"/>
    </source>
</evidence>
<evidence type="ECO:0000250" key="2">
    <source>
        <dbReference type="UniProtKB" id="Q05066"/>
    </source>
</evidence>
<evidence type="ECO:0000255" key="3">
    <source>
        <dbReference type="PROSITE-ProRule" id="PRU00267"/>
    </source>
</evidence>
<evidence type="ECO:0000256" key="4">
    <source>
        <dbReference type="SAM" id="MobiDB-lite"/>
    </source>
</evidence>
<evidence type="ECO:0000305" key="5"/>
<accession>Q28447</accession>